<name>GPH_NEIMA</name>
<accession>Q9JTP5</accession>
<accession>A1ISQ7</accession>
<sequence>MNAAIEHVQAVAFDLDGTLCDSVPDLAAAAEAMLEQLGMKPLPAKVVESYVGDGIGKLVHRVLTNDRDREADSELWEKGFVSYMKYYRDHLSVFTRPYPETEAGLALLKSLGIPLAVITNKNEILAAELLKQLGLADYFSLILGGDSLPEKKPSPLPLRHAAEVLGIDVANMVMVGDSRNDIIAAKAAGCLSVGVTFGYGDMTLLSQDDATRPDWIIGSLPEIYENLQPQKNKEE</sequence>
<organism>
    <name type="scientific">Neisseria meningitidis serogroup A / serotype 4A (strain DSM 15465 / Z2491)</name>
    <dbReference type="NCBI Taxonomy" id="122587"/>
    <lineage>
        <taxon>Bacteria</taxon>
        <taxon>Pseudomonadati</taxon>
        <taxon>Pseudomonadota</taxon>
        <taxon>Betaproteobacteria</taxon>
        <taxon>Neisseriales</taxon>
        <taxon>Neisseriaceae</taxon>
        <taxon>Neisseria</taxon>
    </lineage>
</organism>
<reference key="1">
    <citation type="journal article" date="2000" name="Nature">
        <title>Complete DNA sequence of a serogroup A strain of Neisseria meningitidis Z2491.</title>
        <authorList>
            <person name="Parkhill J."/>
            <person name="Achtman M."/>
            <person name="James K.D."/>
            <person name="Bentley S.D."/>
            <person name="Churcher C.M."/>
            <person name="Klee S.R."/>
            <person name="Morelli G."/>
            <person name="Basham D."/>
            <person name="Brown D."/>
            <person name="Chillingworth T."/>
            <person name="Davies R.M."/>
            <person name="Davis P."/>
            <person name="Devlin K."/>
            <person name="Feltwell T."/>
            <person name="Hamlin N."/>
            <person name="Holroyd S."/>
            <person name="Jagels K."/>
            <person name="Leather S."/>
            <person name="Moule S."/>
            <person name="Mungall K.L."/>
            <person name="Quail M.A."/>
            <person name="Rajandream M.A."/>
            <person name="Rutherford K.M."/>
            <person name="Simmonds M."/>
            <person name="Skelton J."/>
            <person name="Whitehead S."/>
            <person name="Spratt B.G."/>
            <person name="Barrell B.G."/>
        </authorList>
    </citation>
    <scope>NUCLEOTIDE SEQUENCE [LARGE SCALE GENOMIC DNA]</scope>
    <source>
        <strain>DSM 15465 / Z2491</strain>
    </source>
</reference>
<dbReference type="EC" id="3.1.3.18" evidence="1"/>
<dbReference type="EMBL" id="AL157959">
    <property type="protein sequence ID" value="CAM08819.1"/>
    <property type="molecule type" value="Genomic_DNA"/>
</dbReference>
<dbReference type="PIR" id="C81864">
    <property type="entry name" value="C81864"/>
</dbReference>
<dbReference type="RefSeq" id="WP_002241765.1">
    <property type="nucleotide sequence ID" value="NC_003116.1"/>
</dbReference>
<dbReference type="SMR" id="Q9JTP5"/>
<dbReference type="EnsemblBacteria" id="CAM08819">
    <property type="protein sequence ID" value="CAM08819"/>
    <property type="gene ID" value="NMA1688"/>
</dbReference>
<dbReference type="KEGG" id="nma:NMA1688"/>
<dbReference type="HOGENOM" id="CLU_045011_19_1_4"/>
<dbReference type="UniPathway" id="UPA00865">
    <property type="reaction ID" value="UER00834"/>
</dbReference>
<dbReference type="Proteomes" id="UP000000626">
    <property type="component" value="Chromosome"/>
</dbReference>
<dbReference type="GO" id="GO:0005829">
    <property type="term" value="C:cytosol"/>
    <property type="evidence" value="ECO:0007669"/>
    <property type="project" value="TreeGrafter"/>
</dbReference>
<dbReference type="GO" id="GO:0046872">
    <property type="term" value="F:metal ion binding"/>
    <property type="evidence" value="ECO:0007669"/>
    <property type="project" value="UniProtKB-KW"/>
</dbReference>
<dbReference type="GO" id="GO:0008967">
    <property type="term" value="F:phosphoglycolate phosphatase activity"/>
    <property type="evidence" value="ECO:0007669"/>
    <property type="project" value="UniProtKB-UniRule"/>
</dbReference>
<dbReference type="GO" id="GO:0005975">
    <property type="term" value="P:carbohydrate metabolic process"/>
    <property type="evidence" value="ECO:0007669"/>
    <property type="project" value="InterPro"/>
</dbReference>
<dbReference type="GO" id="GO:0006281">
    <property type="term" value="P:DNA repair"/>
    <property type="evidence" value="ECO:0007669"/>
    <property type="project" value="TreeGrafter"/>
</dbReference>
<dbReference type="GO" id="GO:0046295">
    <property type="term" value="P:glycolate biosynthetic process"/>
    <property type="evidence" value="ECO:0007669"/>
    <property type="project" value="UniProtKB-UniRule"/>
</dbReference>
<dbReference type="CDD" id="cd16417">
    <property type="entry name" value="HAD_PGPase"/>
    <property type="match status" value="1"/>
</dbReference>
<dbReference type="FunFam" id="3.40.50.1000:FF:000022">
    <property type="entry name" value="Phosphoglycolate phosphatase"/>
    <property type="match status" value="1"/>
</dbReference>
<dbReference type="Gene3D" id="3.40.50.1000">
    <property type="entry name" value="HAD superfamily/HAD-like"/>
    <property type="match status" value="1"/>
</dbReference>
<dbReference type="Gene3D" id="1.10.150.240">
    <property type="entry name" value="Putative phosphatase, domain 2"/>
    <property type="match status" value="1"/>
</dbReference>
<dbReference type="HAMAP" id="MF_00495">
    <property type="entry name" value="GPH_hydrolase_bact"/>
    <property type="match status" value="1"/>
</dbReference>
<dbReference type="InterPro" id="IPR050155">
    <property type="entry name" value="HAD-like_hydrolase_sf"/>
</dbReference>
<dbReference type="InterPro" id="IPR036412">
    <property type="entry name" value="HAD-like_sf"/>
</dbReference>
<dbReference type="InterPro" id="IPR006439">
    <property type="entry name" value="HAD-SF_hydro_IA"/>
</dbReference>
<dbReference type="InterPro" id="IPR023214">
    <property type="entry name" value="HAD_sf"/>
</dbReference>
<dbReference type="InterPro" id="IPR023198">
    <property type="entry name" value="PGP-like_dom2"/>
</dbReference>
<dbReference type="InterPro" id="IPR037512">
    <property type="entry name" value="PGPase_prok"/>
</dbReference>
<dbReference type="NCBIfam" id="TIGR01549">
    <property type="entry name" value="HAD-SF-IA-v1"/>
    <property type="match status" value="1"/>
</dbReference>
<dbReference type="NCBIfam" id="TIGR01509">
    <property type="entry name" value="HAD-SF-IA-v3"/>
    <property type="match status" value="1"/>
</dbReference>
<dbReference type="NCBIfam" id="TIGR01449">
    <property type="entry name" value="PGP_bact"/>
    <property type="match status" value="1"/>
</dbReference>
<dbReference type="NCBIfam" id="NF009695">
    <property type="entry name" value="PRK13222.1-2"/>
    <property type="match status" value="1"/>
</dbReference>
<dbReference type="PANTHER" id="PTHR43434">
    <property type="entry name" value="PHOSPHOGLYCOLATE PHOSPHATASE"/>
    <property type="match status" value="1"/>
</dbReference>
<dbReference type="PANTHER" id="PTHR43434:SF1">
    <property type="entry name" value="PHOSPHOGLYCOLATE PHOSPHATASE"/>
    <property type="match status" value="1"/>
</dbReference>
<dbReference type="Pfam" id="PF00702">
    <property type="entry name" value="Hydrolase"/>
    <property type="match status" value="1"/>
</dbReference>
<dbReference type="PRINTS" id="PR00413">
    <property type="entry name" value="HADHALOGNASE"/>
</dbReference>
<dbReference type="SFLD" id="SFLDG01135">
    <property type="entry name" value="C1.5.6:_HAD__Beta-PGM__Phospha"/>
    <property type="match status" value="1"/>
</dbReference>
<dbReference type="SFLD" id="SFLDG01129">
    <property type="entry name" value="C1.5:_HAD__Beta-PGM__Phosphata"/>
    <property type="match status" value="1"/>
</dbReference>
<dbReference type="SUPFAM" id="SSF56784">
    <property type="entry name" value="HAD-like"/>
    <property type="match status" value="1"/>
</dbReference>
<comment type="function">
    <text evidence="1">Specifically catalyzes the dephosphorylation of 2-phosphoglycolate. Is involved in the dissimilation of the intracellular 2-phosphoglycolate formed during the DNA repair of 3'-phosphoglycolate ends, a major class of DNA lesions induced by oxidative stress.</text>
</comment>
<comment type="catalytic activity">
    <reaction evidence="1">
        <text>2-phosphoglycolate + H2O = glycolate + phosphate</text>
        <dbReference type="Rhea" id="RHEA:14369"/>
        <dbReference type="ChEBI" id="CHEBI:15377"/>
        <dbReference type="ChEBI" id="CHEBI:29805"/>
        <dbReference type="ChEBI" id="CHEBI:43474"/>
        <dbReference type="ChEBI" id="CHEBI:58033"/>
        <dbReference type="EC" id="3.1.3.18"/>
    </reaction>
</comment>
<comment type="cofactor">
    <cofactor evidence="1">
        <name>Mg(2+)</name>
        <dbReference type="ChEBI" id="CHEBI:18420"/>
    </cofactor>
</comment>
<comment type="pathway">
    <text evidence="1">Organic acid metabolism; glycolate biosynthesis; glycolate from 2-phosphoglycolate: step 1/1.</text>
</comment>
<comment type="similarity">
    <text evidence="1">Belongs to the HAD-like hydrolase superfamily. CbbY/CbbZ/Gph/YieH family.</text>
</comment>
<gene>
    <name evidence="1" type="primary">gph</name>
    <name type="ordered locus">NMA1688</name>
</gene>
<keyword id="KW-0119">Carbohydrate metabolism</keyword>
<keyword id="KW-0378">Hydrolase</keyword>
<keyword id="KW-0460">Magnesium</keyword>
<keyword id="KW-0479">Metal-binding</keyword>
<evidence type="ECO:0000255" key="1">
    <source>
        <dbReference type="HAMAP-Rule" id="MF_00495"/>
    </source>
</evidence>
<proteinExistence type="inferred from homology"/>
<feature type="chain" id="PRO_0000108031" description="Phosphoglycolate phosphatase">
    <location>
        <begin position="1"/>
        <end position="235"/>
    </location>
</feature>
<feature type="active site" description="Nucleophile" evidence="1">
    <location>
        <position position="14"/>
    </location>
</feature>
<feature type="binding site" evidence="1">
    <location>
        <position position="14"/>
    </location>
    <ligand>
        <name>Mg(2+)</name>
        <dbReference type="ChEBI" id="CHEBI:18420"/>
    </ligand>
</feature>
<feature type="binding site" evidence="1">
    <location>
        <position position="16"/>
    </location>
    <ligand>
        <name>Mg(2+)</name>
        <dbReference type="ChEBI" id="CHEBI:18420"/>
    </ligand>
</feature>
<feature type="binding site" evidence="1">
    <location>
        <position position="177"/>
    </location>
    <ligand>
        <name>Mg(2+)</name>
        <dbReference type="ChEBI" id="CHEBI:18420"/>
    </ligand>
</feature>
<protein>
    <recommendedName>
        <fullName evidence="1">Phosphoglycolate phosphatase</fullName>
        <shortName evidence="1">PGP</shortName>
        <shortName evidence="1">PGPase</shortName>
        <ecNumber evidence="1">3.1.3.18</ecNumber>
    </recommendedName>
</protein>